<dbReference type="EC" id="2.8.1.-" evidence="1"/>
<dbReference type="EMBL" id="AE009442">
    <property type="protein sequence ID" value="AAO29415.1"/>
    <property type="status" value="ALT_INIT"/>
    <property type="molecule type" value="Genomic_DNA"/>
</dbReference>
<dbReference type="RefSeq" id="WP_004088754.1">
    <property type="nucleotide sequence ID" value="NC_004556.1"/>
</dbReference>
<dbReference type="SMR" id="Q87B85"/>
<dbReference type="GeneID" id="93905400"/>
<dbReference type="KEGG" id="xft:PD_1573"/>
<dbReference type="HOGENOM" id="CLU_026481_0_0_6"/>
<dbReference type="Proteomes" id="UP000002516">
    <property type="component" value="Chromosome"/>
</dbReference>
<dbReference type="GO" id="GO:0005737">
    <property type="term" value="C:cytoplasm"/>
    <property type="evidence" value="ECO:0007669"/>
    <property type="project" value="UniProtKB-SubCell"/>
</dbReference>
<dbReference type="GO" id="GO:0051539">
    <property type="term" value="F:4 iron, 4 sulfur cluster binding"/>
    <property type="evidence" value="ECO:0007669"/>
    <property type="project" value="UniProtKB-UniRule"/>
</dbReference>
<dbReference type="GO" id="GO:0005524">
    <property type="term" value="F:ATP binding"/>
    <property type="evidence" value="ECO:0007669"/>
    <property type="project" value="UniProtKB-UniRule"/>
</dbReference>
<dbReference type="GO" id="GO:0000287">
    <property type="term" value="F:magnesium ion binding"/>
    <property type="evidence" value="ECO:0007669"/>
    <property type="project" value="UniProtKB-UniRule"/>
</dbReference>
<dbReference type="GO" id="GO:0016783">
    <property type="term" value="F:sulfurtransferase activity"/>
    <property type="evidence" value="ECO:0007669"/>
    <property type="project" value="UniProtKB-UniRule"/>
</dbReference>
<dbReference type="GO" id="GO:0000049">
    <property type="term" value="F:tRNA binding"/>
    <property type="evidence" value="ECO:0007669"/>
    <property type="project" value="UniProtKB-KW"/>
</dbReference>
<dbReference type="GO" id="GO:0034227">
    <property type="term" value="P:tRNA thio-modification"/>
    <property type="evidence" value="ECO:0007669"/>
    <property type="project" value="UniProtKB-UniRule"/>
</dbReference>
<dbReference type="CDD" id="cd24138">
    <property type="entry name" value="TtcA-like"/>
    <property type="match status" value="1"/>
</dbReference>
<dbReference type="Gene3D" id="3.40.50.620">
    <property type="entry name" value="HUPs"/>
    <property type="match status" value="1"/>
</dbReference>
<dbReference type="HAMAP" id="MF_01850">
    <property type="entry name" value="TtcA"/>
    <property type="match status" value="1"/>
</dbReference>
<dbReference type="InterPro" id="IPR014729">
    <property type="entry name" value="Rossmann-like_a/b/a_fold"/>
</dbReference>
<dbReference type="InterPro" id="IPR011063">
    <property type="entry name" value="TilS/TtcA_N"/>
</dbReference>
<dbReference type="InterPro" id="IPR012089">
    <property type="entry name" value="tRNA_Cyd_32_2_STrfase"/>
</dbReference>
<dbReference type="InterPro" id="IPR035107">
    <property type="entry name" value="tRNA_thiolation_TtcA_Ctu1"/>
</dbReference>
<dbReference type="NCBIfam" id="NF007972">
    <property type="entry name" value="PRK10696.1"/>
    <property type="match status" value="1"/>
</dbReference>
<dbReference type="PANTHER" id="PTHR43686:SF1">
    <property type="entry name" value="AMINOTRAN_5 DOMAIN-CONTAINING PROTEIN"/>
    <property type="match status" value="1"/>
</dbReference>
<dbReference type="PANTHER" id="PTHR43686">
    <property type="entry name" value="SULFURTRANSFERASE-RELATED"/>
    <property type="match status" value="1"/>
</dbReference>
<dbReference type="Pfam" id="PF01171">
    <property type="entry name" value="ATP_bind_3"/>
    <property type="match status" value="1"/>
</dbReference>
<dbReference type="PIRSF" id="PIRSF004976">
    <property type="entry name" value="ATPase_YdaO"/>
    <property type="match status" value="1"/>
</dbReference>
<dbReference type="SUPFAM" id="SSF52402">
    <property type="entry name" value="Adenine nucleotide alpha hydrolases-like"/>
    <property type="match status" value="1"/>
</dbReference>
<accession>Q87B85</accession>
<organism>
    <name type="scientific">Xylella fastidiosa (strain Temecula1 / ATCC 700964)</name>
    <dbReference type="NCBI Taxonomy" id="183190"/>
    <lineage>
        <taxon>Bacteria</taxon>
        <taxon>Pseudomonadati</taxon>
        <taxon>Pseudomonadota</taxon>
        <taxon>Gammaproteobacteria</taxon>
        <taxon>Lysobacterales</taxon>
        <taxon>Lysobacteraceae</taxon>
        <taxon>Xylella</taxon>
    </lineage>
</organism>
<protein>
    <recommendedName>
        <fullName evidence="1">tRNA-cytidine(32) 2-sulfurtransferase</fullName>
        <ecNumber evidence="1">2.8.1.-</ecNumber>
    </recommendedName>
    <alternativeName>
        <fullName evidence="1">Two-thiocytidine biosynthesis protein A</fullName>
    </alternativeName>
    <alternativeName>
        <fullName evidence="1">tRNA 2-thiocytidine biosynthesis protein TtcA</fullName>
    </alternativeName>
</protein>
<comment type="function">
    <text evidence="1">Catalyzes the ATP-dependent 2-thiolation of cytidine in position 32 of tRNA, to form 2-thiocytidine (s(2)C32). The sulfur atoms are provided by the cysteine/cysteine desulfurase (IscS) system.</text>
</comment>
<comment type="catalytic activity">
    <reaction evidence="1">
        <text>cytidine(32) in tRNA + S-sulfanyl-L-cysteinyl-[cysteine desulfurase] + AH2 + ATP = 2-thiocytidine(32) in tRNA + L-cysteinyl-[cysteine desulfurase] + A + AMP + diphosphate + H(+)</text>
        <dbReference type="Rhea" id="RHEA:57048"/>
        <dbReference type="Rhea" id="RHEA-COMP:10288"/>
        <dbReference type="Rhea" id="RHEA-COMP:12157"/>
        <dbReference type="Rhea" id="RHEA-COMP:12158"/>
        <dbReference type="Rhea" id="RHEA-COMP:14821"/>
        <dbReference type="ChEBI" id="CHEBI:13193"/>
        <dbReference type="ChEBI" id="CHEBI:15378"/>
        <dbReference type="ChEBI" id="CHEBI:17499"/>
        <dbReference type="ChEBI" id="CHEBI:29950"/>
        <dbReference type="ChEBI" id="CHEBI:30616"/>
        <dbReference type="ChEBI" id="CHEBI:33019"/>
        <dbReference type="ChEBI" id="CHEBI:61963"/>
        <dbReference type="ChEBI" id="CHEBI:82748"/>
        <dbReference type="ChEBI" id="CHEBI:141453"/>
        <dbReference type="ChEBI" id="CHEBI:456215"/>
    </reaction>
    <physiologicalReaction direction="left-to-right" evidence="1">
        <dbReference type="Rhea" id="RHEA:57049"/>
    </physiologicalReaction>
</comment>
<comment type="cofactor">
    <cofactor evidence="1">
        <name>Mg(2+)</name>
        <dbReference type="ChEBI" id="CHEBI:18420"/>
    </cofactor>
</comment>
<comment type="cofactor">
    <cofactor evidence="1">
        <name>[4Fe-4S] cluster</name>
        <dbReference type="ChEBI" id="CHEBI:49883"/>
    </cofactor>
    <text evidence="1">Binds 1 [4Fe-4S] cluster per subunit. The cluster is chelated by three Cys residues, the fourth Fe has a free coordination site that may bind a sulfur atom transferred from the persulfide of IscS.</text>
</comment>
<comment type="pathway">
    <text evidence="1">tRNA modification.</text>
</comment>
<comment type="subunit">
    <text evidence="1">Homodimer.</text>
</comment>
<comment type="subcellular location">
    <subcellularLocation>
        <location evidence="1">Cytoplasm</location>
    </subcellularLocation>
</comment>
<comment type="miscellaneous">
    <text evidence="1">The thiolation reaction likely consists of two steps: a first activation step by ATP to form an adenylated intermediate of the target base of tRNA, and a second nucleophilic substitution step of the sulfur (S) atom supplied by the hydrosulfide attached to the Fe-S cluster.</text>
</comment>
<comment type="similarity">
    <text evidence="1">Belongs to the TtcA family.</text>
</comment>
<comment type="sequence caution" evidence="2">
    <conflict type="erroneous initiation">
        <sequence resource="EMBL-CDS" id="AAO29415"/>
    </conflict>
    <text>Extended N-terminus.</text>
</comment>
<evidence type="ECO:0000255" key="1">
    <source>
        <dbReference type="HAMAP-Rule" id="MF_01850"/>
    </source>
</evidence>
<evidence type="ECO:0000305" key="2"/>
<name>TTCA_XYLFT</name>
<reference key="1">
    <citation type="journal article" date="2003" name="J. Bacteriol.">
        <title>Comparative analyses of the complete genome sequences of Pierce's disease and citrus variegated chlorosis strains of Xylella fastidiosa.</title>
        <authorList>
            <person name="Van Sluys M.A."/>
            <person name="de Oliveira M.C."/>
            <person name="Monteiro-Vitorello C.B."/>
            <person name="Miyaki C.Y."/>
            <person name="Furlan L.R."/>
            <person name="Camargo L.E.A."/>
            <person name="da Silva A.C.R."/>
            <person name="Moon D.H."/>
            <person name="Takita M.A."/>
            <person name="Lemos E.G.M."/>
            <person name="Machado M.A."/>
            <person name="Ferro M.I.T."/>
            <person name="da Silva F.R."/>
            <person name="Goldman M.H.S."/>
            <person name="Goldman G.H."/>
            <person name="Lemos M.V.F."/>
            <person name="El-Dorry H."/>
            <person name="Tsai S.M."/>
            <person name="Carrer H."/>
            <person name="Carraro D.M."/>
            <person name="de Oliveira R.C."/>
            <person name="Nunes L.R."/>
            <person name="Siqueira W.J."/>
            <person name="Coutinho L.L."/>
            <person name="Kimura E.T."/>
            <person name="Ferro E.S."/>
            <person name="Harakava R."/>
            <person name="Kuramae E.E."/>
            <person name="Marino C.L."/>
            <person name="Giglioti E."/>
            <person name="Abreu I.L."/>
            <person name="Alves L.M.C."/>
            <person name="do Amaral A.M."/>
            <person name="Baia G.S."/>
            <person name="Blanco S.R."/>
            <person name="Brito M.S."/>
            <person name="Cannavan F.S."/>
            <person name="Celestino A.V."/>
            <person name="da Cunha A.F."/>
            <person name="Fenille R.C."/>
            <person name="Ferro J.A."/>
            <person name="Formighieri E.F."/>
            <person name="Kishi L.T."/>
            <person name="Leoni S.G."/>
            <person name="Oliveira A.R."/>
            <person name="Rosa V.E. Jr."/>
            <person name="Sassaki F.T."/>
            <person name="Sena J.A.D."/>
            <person name="de Souza A.A."/>
            <person name="Truffi D."/>
            <person name="Tsukumo F."/>
            <person name="Yanai G.M."/>
            <person name="Zaros L.G."/>
            <person name="Civerolo E.L."/>
            <person name="Simpson A.J.G."/>
            <person name="Almeida N.F. Jr."/>
            <person name="Setubal J.C."/>
            <person name="Kitajima J.P."/>
        </authorList>
    </citation>
    <scope>NUCLEOTIDE SEQUENCE [LARGE SCALE GENOMIC DNA]</scope>
    <source>
        <strain>Temecula1 / ATCC 700964</strain>
    </source>
</reference>
<proteinExistence type="inferred from homology"/>
<feature type="chain" id="PRO_0000348879" description="tRNA-cytidine(32) 2-sulfurtransferase">
    <location>
        <begin position="1"/>
        <end position="299"/>
    </location>
</feature>
<feature type="short sequence motif" description="PP-loop motif" evidence="1">
    <location>
        <begin position="56"/>
        <end position="61"/>
    </location>
</feature>
<feature type="binding site" evidence="1">
    <location>
        <position position="131"/>
    </location>
    <ligand>
        <name>[4Fe-4S] cluster</name>
        <dbReference type="ChEBI" id="CHEBI:49883"/>
    </ligand>
</feature>
<feature type="binding site" evidence="1">
    <location>
        <position position="134"/>
    </location>
    <ligand>
        <name>[4Fe-4S] cluster</name>
        <dbReference type="ChEBI" id="CHEBI:49883"/>
    </ligand>
</feature>
<feature type="binding site" evidence="1">
    <location>
        <position position="222"/>
    </location>
    <ligand>
        <name>[4Fe-4S] cluster</name>
        <dbReference type="ChEBI" id="CHEBI:49883"/>
    </ligand>
</feature>
<keyword id="KW-0004">4Fe-4S</keyword>
<keyword id="KW-0067">ATP-binding</keyword>
<keyword id="KW-0963">Cytoplasm</keyword>
<keyword id="KW-0408">Iron</keyword>
<keyword id="KW-0411">Iron-sulfur</keyword>
<keyword id="KW-0460">Magnesium</keyword>
<keyword id="KW-0479">Metal-binding</keyword>
<keyword id="KW-0547">Nucleotide-binding</keyword>
<keyword id="KW-1185">Reference proteome</keyword>
<keyword id="KW-0694">RNA-binding</keyword>
<keyword id="KW-0808">Transferase</keyword>
<keyword id="KW-0819">tRNA processing</keyword>
<keyword id="KW-0820">tRNA-binding</keyword>
<sequence>MDATFPSQHNITARPAPGRIRREQCKLAKRLRRQVGQAIADFGMIEANDKIMVCLSGGKDSYTLLDMLLQLRAKAPVPFELTAVNLDQKQPGFPKHVLPEYLSSIGVPYHIIEQDTYSVVTRVVPEGKTLCALCSRMRRGALYAYAETQGFTKIALGHHRDDMVATFFMNLFHHAKLSGMPPKLRSDNGKHVVIRPLAYVSETDIIAYADAREFPIIPCNLCGSQENLQRKQVGVMLKAWEKEYPGRIEQIARALGNIRPSQLADQSLFDFLALGRHSNTPLPNAHAWLAGDLANDTAP</sequence>
<gene>
    <name evidence="1" type="primary">ttcA</name>
    <name type="ordered locus">PD_1573</name>
</gene>